<name>ZNT8_XENLA</name>
<sequence>MKGPEKAYLVSDKATKMYSLTMDSSEKNNCGKPPLQDDENPHIKYHCHNNNTKAYDARQREQTSAKKKLCIASLICFVFISAEIVGGYIAGSLAVVTDAAHLLVDLSSFFISLGSLWLSSKSSTMRLTFGWYRAEILGALMSIITIWLVTGVLVYLAIERIIRPDYTIDGTVMLITSACALGANVVLALILHQSGHGHSHAGGKHEHMASEYKPQTNASIRAAFIHVIGDLFQSISVLISALIIYFKPEYKIADPICTFIFSIFVLITTVTVLRDLLNILMEGTPRGIHYSDVKQSILAVDGVKSVHSLHLWALTMNQVILSAHIATDILGESKRILKDVTQNVCSSFPFHSVTIQVEPVEEQSPECMFCYEPTQ</sequence>
<organism>
    <name type="scientific">Xenopus laevis</name>
    <name type="common">African clawed frog</name>
    <dbReference type="NCBI Taxonomy" id="8355"/>
    <lineage>
        <taxon>Eukaryota</taxon>
        <taxon>Metazoa</taxon>
        <taxon>Chordata</taxon>
        <taxon>Craniata</taxon>
        <taxon>Vertebrata</taxon>
        <taxon>Euteleostomi</taxon>
        <taxon>Amphibia</taxon>
        <taxon>Batrachia</taxon>
        <taxon>Anura</taxon>
        <taxon>Pipoidea</taxon>
        <taxon>Pipidae</taxon>
        <taxon>Xenopodinae</taxon>
        <taxon>Xenopus</taxon>
        <taxon>Xenopus</taxon>
    </lineage>
</organism>
<feature type="chain" id="PRO_0000281742" description="Proton-coupled zinc antiporter SLC30A8">
    <location>
        <begin position="1"/>
        <end position="375"/>
    </location>
</feature>
<feature type="topological domain" description="Cytoplasmic" evidence="1">
    <location>
        <begin position="1"/>
        <end position="68"/>
    </location>
</feature>
<feature type="transmembrane region" description="Helical" evidence="2">
    <location>
        <begin position="69"/>
        <end position="89"/>
    </location>
</feature>
<feature type="topological domain" description="Lumenal, vesicle" evidence="1">
    <location>
        <begin position="90"/>
        <end position="98"/>
    </location>
</feature>
<feature type="transmembrane region" description="Helical" evidence="2">
    <location>
        <begin position="99"/>
        <end position="119"/>
    </location>
</feature>
<feature type="topological domain" description="Cytoplasmic" evidence="1">
    <location>
        <begin position="120"/>
        <end position="135"/>
    </location>
</feature>
<feature type="transmembrane region" description="Helical" evidence="2">
    <location>
        <begin position="136"/>
        <end position="156"/>
    </location>
</feature>
<feature type="topological domain" description="Lumenal, vesicle" evidence="1">
    <location>
        <begin position="157"/>
        <end position="170"/>
    </location>
</feature>
<feature type="transmembrane region" description="Helical" evidence="2">
    <location>
        <begin position="171"/>
        <end position="191"/>
    </location>
</feature>
<feature type="topological domain" description="Cytoplasmic" evidence="1">
    <location>
        <begin position="192"/>
        <end position="223"/>
    </location>
</feature>
<feature type="transmembrane region" description="Helical" evidence="2">
    <location>
        <begin position="224"/>
        <end position="244"/>
    </location>
</feature>
<feature type="topological domain" description="Lumenal, vesicle" evidence="1">
    <location>
        <begin position="245"/>
        <end position="251"/>
    </location>
</feature>
<feature type="transmembrane region" description="Helical" evidence="2">
    <location>
        <begin position="252"/>
        <end position="272"/>
    </location>
</feature>
<feature type="topological domain" description="Cytoplasmic" evidence="1">
    <location>
        <begin position="273"/>
        <end position="375"/>
    </location>
</feature>
<feature type="short sequence motif" description="HCH Motif; seals regulatory zinc-binding pocket" evidence="1">
    <location>
        <begin position="46"/>
        <end position="48"/>
    </location>
</feature>
<feature type="binding site" description="in chain A" evidence="1">
    <location>
        <position position="46"/>
    </location>
    <ligand>
        <name>Zn(2+)</name>
        <dbReference type="ChEBI" id="CHEBI:29105"/>
        <label>3</label>
        <note>regulatory; ligand shared between homodimeric partners</note>
    </ligand>
</feature>
<feature type="binding site" description="in chain A" evidence="1">
    <location>
        <position position="47"/>
    </location>
    <ligand>
        <name>Zn(2+)</name>
        <dbReference type="ChEBI" id="CHEBI:29105"/>
        <label>2</label>
        <note>regulatory; ligand shared between homodimeric partners</note>
    </ligand>
</feature>
<feature type="binding site" description="in chain A" evidence="1">
    <location>
        <position position="48"/>
    </location>
    <ligand>
        <name>Zn(2+)</name>
        <dbReference type="ChEBI" id="CHEBI:29105"/>
        <label>3</label>
        <note>regulatory; ligand shared between homodimeric partners</note>
    </ligand>
</feature>
<feature type="binding site" evidence="1">
    <location>
        <position position="101"/>
    </location>
    <ligand>
        <name>Zn(2+)</name>
        <dbReference type="ChEBI" id="CHEBI:29105"/>
        <label>1</label>
        <note>transported zinc</note>
    </ligand>
</feature>
<feature type="binding site" evidence="1">
    <location>
        <position position="105"/>
    </location>
    <ligand>
        <name>Zn(2+)</name>
        <dbReference type="ChEBI" id="CHEBI:29105"/>
        <label>1</label>
        <note>transported zinc</note>
    </ligand>
</feature>
<feature type="binding site" evidence="1">
    <location>
        <position position="226"/>
    </location>
    <ligand>
        <name>Zn(2+)</name>
        <dbReference type="ChEBI" id="CHEBI:29105"/>
        <label>1</label>
        <note>transported zinc</note>
    </ligand>
</feature>
<feature type="binding site" evidence="1">
    <location>
        <position position="230"/>
    </location>
    <ligand>
        <name>Zn(2+)</name>
        <dbReference type="ChEBI" id="CHEBI:29105"/>
        <label>1</label>
        <note>transported zinc</note>
    </ligand>
</feature>
<feature type="binding site" description="in chain B" evidence="1">
    <location>
        <position position="307"/>
    </location>
    <ligand>
        <name>Zn(2+)</name>
        <dbReference type="ChEBI" id="CHEBI:29105"/>
        <label>2</label>
        <note>regulatory; ligand shared between homodimeric partners</note>
    </ligand>
</feature>
<feature type="binding site" description="in chain B" evidence="1">
    <location>
        <position position="324"/>
    </location>
    <ligand>
        <name>Zn(2+)</name>
        <dbReference type="ChEBI" id="CHEBI:29105"/>
        <label>2</label>
        <note>regulatory; ligand shared between homodimeric partners</note>
    </ligand>
</feature>
<feature type="binding site" evidence="1">
    <location>
        <position position="351"/>
    </location>
    <ligand>
        <name>Zn(2+)</name>
        <dbReference type="ChEBI" id="CHEBI:29105"/>
        <label>4</label>
        <note>low affinity</note>
    </ligand>
</feature>
<feature type="binding site" description="in chain B" evidence="1">
    <location>
        <position position="358"/>
    </location>
    <ligand>
        <name>Zn(2+)</name>
        <dbReference type="ChEBI" id="CHEBI:29105"/>
        <label>2</label>
        <note>regulatory; ligand shared between homodimeric partners</note>
    </ligand>
</feature>
<feature type="binding site" description="in chain B" evidence="1">
    <location>
        <position position="367"/>
    </location>
    <ligand>
        <name>Zn(2+)</name>
        <dbReference type="ChEBI" id="CHEBI:29105"/>
        <label>3</label>
        <note>regulatory; ligand shared between homodimeric partners</note>
    </ligand>
</feature>
<feature type="binding site" description="in chain B" evidence="1">
    <location>
        <position position="370"/>
    </location>
    <ligand>
        <name>Zn(2+)</name>
        <dbReference type="ChEBI" id="CHEBI:29105"/>
        <label>3</label>
        <note>regulatory; ligand shared between homodimeric partners</note>
    </ligand>
</feature>
<protein>
    <recommendedName>
        <fullName evidence="3">Proton-coupled zinc antiporter SLC30A8</fullName>
    </recommendedName>
    <alternativeName>
        <fullName>Solute carrier family 30 member 8</fullName>
    </alternativeName>
    <alternativeName>
        <fullName>Zinc transporter 8</fullName>
        <shortName>ZnT-8</shortName>
    </alternativeName>
</protein>
<dbReference type="EMBL" id="BC088803">
    <property type="protein sequence ID" value="AAH88803.1"/>
    <property type="molecule type" value="mRNA"/>
</dbReference>
<dbReference type="RefSeq" id="NP_001088922.1">
    <property type="nucleotide sequence ID" value="NM_001095453.1"/>
</dbReference>
<dbReference type="SMR" id="Q5I020"/>
<dbReference type="DNASU" id="496294"/>
<dbReference type="AGR" id="Xenbase:XB-GENE-958130"/>
<dbReference type="Xenbase" id="XB-GENE-958130">
    <property type="gene designation" value="slc30a8.L"/>
</dbReference>
<dbReference type="OrthoDB" id="9944568at2759"/>
<dbReference type="Proteomes" id="UP000186698">
    <property type="component" value="Unplaced"/>
</dbReference>
<dbReference type="Bgee" id="496294">
    <property type="expression patterns" value="Expressed in neurula embryo and 7 other cell types or tissues"/>
</dbReference>
<dbReference type="GO" id="GO:0005886">
    <property type="term" value="C:plasma membrane"/>
    <property type="evidence" value="ECO:0000318"/>
    <property type="project" value="GO_Central"/>
</dbReference>
<dbReference type="GO" id="GO:0030667">
    <property type="term" value="C:secretory granule membrane"/>
    <property type="evidence" value="ECO:0000250"/>
    <property type="project" value="UniProtKB"/>
</dbReference>
<dbReference type="GO" id="GO:0030658">
    <property type="term" value="C:transport vesicle membrane"/>
    <property type="evidence" value="ECO:0007669"/>
    <property type="project" value="UniProtKB-SubCell"/>
</dbReference>
<dbReference type="GO" id="GO:0046872">
    <property type="term" value="F:metal ion binding"/>
    <property type="evidence" value="ECO:0007669"/>
    <property type="project" value="UniProtKB-KW"/>
</dbReference>
<dbReference type="GO" id="GO:0005385">
    <property type="term" value="F:zinc ion transmembrane transporter activity"/>
    <property type="evidence" value="ECO:0000318"/>
    <property type="project" value="GO_Central"/>
</dbReference>
<dbReference type="GO" id="GO:0140826">
    <property type="term" value="F:zinc:proton antiporter activity"/>
    <property type="evidence" value="ECO:0000250"/>
    <property type="project" value="UniProtKB"/>
</dbReference>
<dbReference type="GO" id="GO:0030073">
    <property type="term" value="P:insulin secretion"/>
    <property type="evidence" value="ECO:0000318"/>
    <property type="project" value="GO_Central"/>
</dbReference>
<dbReference type="GO" id="GO:0009749">
    <property type="term" value="P:response to glucose"/>
    <property type="evidence" value="ECO:0000318"/>
    <property type="project" value="GO_Central"/>
</dbReference>
<dbReference type="GO" id="GO:0010043">
    <property type="term" value="P:response to zinc ion"/>
    <property type="evidence" value="ECO:0000318"/>
    <property type="project" value="GO_Central"/>
</dbReference>
<dbReference type="GO" id="GO:0062111">
    <property type="term" value="P:zinc ion import into organelle"/>
    <property type="evidence" value="ECO:0000250"/>
    <property type="project" value="UniProtKB"/>
</dbReference>
<dbReference type="GO" id="GO:0071577">
    <property type="term" value="P:zinc ion transmembrane transport"/>
    <property type="evidence" value="ECO:0000318"/>
    <property type="project" value="GO_Central"/>
</dbReference>
<dbReference type="FunFam" id="1.20.1510.10:FF:000002">
    <property type="entry name" value="zinc transporter 3 isoform X1"/>
    <property type="match status" value="1"/>
</dbReference>
<dbReference type="Gene3D" id="1.20.1510.10">
    <property type="entry name" value="Cation efflux protein transmembrane domain"/>
    <property type="match status" value="1"/>
</dbReference>
<dbReference type="Gene3D" id="3.30.70.1350">
    <property type="entry name" value="Cation efflux protein, cytoplasmic domain"/>
    <property type="match status" value="1"/>
</dbReference>
<dbReference type="InterPro" id="IPR002524">
    <property type="entry name" value="Cation_efflux"/>
</dbReference>
<dbReference type="InterPro" id="IPR036837">
    <property type="entry name" value="Cation_efflux_CTD_sf"/>
</dbReference>
<dbReference type="InterPro" id="IPR027469">
    <property type="entry name" value="Cation_efflux_TMD_sf"/>
</dbReference>
<dbReference type="InterPro" id="IPR050681">
    <property type="entry name" value="CDF/SLC30A"/>
</dbReference>
<dbReference type="NCBIfam" id="TIGR01297">
    <property type="entry name" value="CDF"/>
    <property type="match status" value="1"/>
</dbReference>
<dbReference type="PANTHER" id="PTHR11562">
    <property type="entry name" value="CATION EFFLUX PROTEIN/ ZINC TRANSPORTER"/>
    <property type="match status" value="1"/>
</dbReference>
<dbReference type="PANTHER" id="PTHR11562:SF37">
    <property type="entry name" value="PROTON-COUPLED ZINC ANTIPORTER SLC30A8"/>
    <property type="match status" value="1"/>
</dbReference>
<dbReference type="Pfam" id="PF01545">
    <property type="entry name" value="Cation_efflux"/>
    <property type="match status" value="1"/>
</dbReference>
<dbReference type="SUPFAM" id="SSF160240">
    <property type="entry name" value="Cation efflux protein cytoplasmic domain-like"/>
    <property type="match status" value="1"/>
</dbReference>
<dbReference type="SUPFAM" id="SSF161111">
    <property type="entry name" value="Cation efflux protein transmembrane domain-like"/>
    <property type="match status" value="1"/>
</dbReference>
<reference key="1">
    <citation type="submission" date="2005-01" db="EMBL/GenBank/DDBJ databases">
        <authorList>
            <consortium name="NIH - Xenopus Gene Collection (XGC) project"/>
        </authorList>
    </citation>
    <scope>NUCLEOTIDE SEQUENCE [LARGE SCALE MRNA]</scope>
    <source>
        <tissue>Embryo</tissue>
    </source>
</reference>
<evidence type="ECO:0000250" key="1">
    <source>
        <dbReference type="UniProtKB" id="Q8IWU4"/>
    </source>
</evidence>
<evidence type="ECO:0000255" key="2"/>
<evidence type="ECO:0000305" key="3"/>
<keyword id="KW-0050">Antiport</keyword>
<keyword id="KW-1003">Cell membrane</keyword>
<keyword id="KW-0968">Cytoplasmic vesicle</keyword>
<keyword id="KW-0406">Ion transport</keyword>
<keyword id="KW-0472">Membrane</keyword>
<keyword id="KW-0479">Metal-binding</keyword>
<keyword id="KW-1185">Reference proteome</keyword>
<keyword id="KW-0812">Transmembrane</keyword>
<keyword id="KW-1133">Transmembrane helix</keyword>
<keyword id="KW-0813">Transport</keyword>
<keyword id="KW-0862">Zinc</keyword>
<keyword id="KW-0864">Zinc transport</keyword>
<accession>Q5I020</accession>
<gene>
    <name type="primary">slc30a8</name>
</gene>
<comment type="function">
    <text evidence="1">Proton-coupled zinc ion antiporter mediating the entry of zinc into the lumen of pancreatic beta cell secretory granules, thereby regulating insulin secretion.</text>
</comment>
<comment type="catalytic activity">
    <reaction evidence="1">
        <text>Zn(2+)(in) + 2 H(+)(out) = Zn(2+)(out) + 2 H(+)(in)</text>
        <dbReference type="Rhea" id="RHEA:72627"/>
        <dbReference type="ChEBI" id="CHEBI:15378"/>
        <dbReference type="ChEBI" id="CHEBI:29105"/>
    </reaction>
</comment>
<comment type="subunit">
    <text evidence="1">Homodimer.</text>
</comment>
<comment type="subcellular location">
    <subcellularLocation>
        <location evidence="1">Cytoplasmic vesicle</location>
        <location evidence="1">Secretory vesicle membrane</location>
        <topology evidence="2">Multi-pass membrane protein</topology>
    </subcellularLocation>
    <subcellularLocation>
        <location evidence="1">Cell membrane</location>
        <topology evidence="2">Multi-pass membrane protein</topology>
    </subcellularLocation>
    <text evidence="1">Associated with insulin and glucagon secretory granules.</text>
</comment>
<comment type="miscellaneous">
    <text evidence="1">Each subunit of the homodimer independently transports zinc ions in a pH-dependent manner. The cytosolic pH promotes binding of zinc ions to the transporter binding site. Upon change into the organelle-facing conformation, the two histidines of the zinc-binding site get protonated at lumenal lower pH, triggering zinc release into the organelle. The transporter then moves back to the cytosolic-facing conformation where the two histidines get deprotonated at higher pH, resulting in a net antiport of 2 protons.</text>
</comment>
<comment type="similarity">
    <text evidence="3">Belongs to the cation diffusion facilitator (CDF) transporter (TC 2.A.4) family. SLC30A subfamily.</text>
</comment>
<proteinExistence type="evidence at transcript level"/>